<comment type="function">
    <text evidence="1">Presumably involved in the processing and regular turnover of intracellular proteins. Catalyzes the removal of unsubstituted N-terminal amino acids from various peptides.</text>
</comment>
<comment type="catalytic activity">
    <reaction evidence="1">
        <text>Release of an N-terminal amino acid, Xaa-|-Yaa-, in which Xaa is preferably Leu, but may be other amino acids including Pro although not Arg or Lys, and Yaa may be Pro. Amino acid amides and methyl esters are also readily hydrolyzed, but rates on arylamides are exceedingly low.</text>
        <dbReference type="EC" id="3.4.11.1"/>
    </reaction>
</comment>
<comment type="catalytic activity">
    <reaction evidence="1">
        <text>Release of an N-terminal amino acid, preferentially leucine, but not glutamic or aspartic acids.</text>
        <dbReference type="EC" id="3.4.11.10"/>
    </reaction>
</comment>
<comment type="cofactor">
    <cofactor evidence="1">
        <name>Mn(2+)</name>
        <dbReference type="ChEBI" id="CHEBI:29035"/>
    </cofactor>
    <text evidence="1">Binds 2 manganese ions per subunit.</text>
</comment>
<comment type="subcellular location">
    <subcellularLocation>
        <location evidence="1">Cytoplasm</location>
    </subcellularLocation>
</comment>
<comment type="similarity">
    <text evidence="1">Belongs to the peptidase M17 family.</text>
</comment>
<protein>
    <recommendedName>
        <fullName evidence="1">Probable cytosol aminopeptidase</fullName>
        <ecNumber evidence="1">3.4.11.1</ecNumber>
    </recommendedName>
    <alternativeName>
        <fullName evidence="1">Leucine aminopeptidase</fullName>
        <shortName evidence="1">LAP</shortName>
        <ecNumber evidence="1">3.4.11.10</ecNumber>
    </alternativeName>
    <alternativeName>
        <fullName evidence="1">Leucyl aminopeptidase</fullName>
    </alternativeName>
</protein>
<accession>Q7NTY9</accession>
<dbReference type="EC" id="3.4.11.1" evidence="1"/>
<dbReference type="EC" id="3.4.11.10" evidence="1"/>
<dbReference type="EMBL" id="AE016825">
    <property type="protein sequence ID" value="AAQ60582.1"/>
    <property type="molecule type" value="Genomic_DNA"/>
</dbReference>
<dbReference type="RefSeq" id="WP_011136461.1">
    <property type="nucleotide sequence ID" value="NC_005085.1"/>
</dbReference>
<dbReference type="SMR" id="Q7NTY9"/>
<dbReference type="STRING" id="243365.CV_2914"/>
<dbReference type="MEROPS" id="M17.003"/>
<dbReference type="KEGG" id="cvi:CV_2914"/>
<dbReference type="eggNOG" id="COG0260">
    <property type="taxonomic scope" value="Bacteria"/>
</dbReference>
<dbReference type="HOGENOM" id="CLU_013734_2_2_4"/>
<dbReference type="OrthoDB" id="9809354at2"/>
<dbReference type="Proteomes" id="UP000001424">
    <property type="component" value="Chromosome"/>
</dbReference>
<dbReference type="GO" id="GO:0005737">
    <property type="term" value="C:cytoplasm"/>
    <property type="evidence" value="ECO:0007669"/>
    <property type="project" value="UniProtKB-SubCell"/>
</dbReference>
<dbReference type="GO" id="GO:0030145">
    <property type="term" value="F:manganese ion binding"/>
    <property type="evidence" value="ECO:0007669"/>
    <property type="project" value="UniProtKB-UniRule"/>
</dbReference>
<dbReference type="GO" id="GO:0070006">
    <property type="term" value="F:metalloaminopeptidase activity"/>
    <property type="evidence" value="ECO:0007669"/>
    <property type="project" value="InterPro"/>
</dbReference>
<dbReference type="GO" id="GO:0006508">
    <property type="term" value="P:proteolysis"/>
    <property type="evidence" value="ECO:0007669"/>
    <property type="project" value="UniProtKB-KW"/>
</dbReference>
<dbReference type="CDD" id="cd00433">
    <property type="entry name" value="Peptidase_M17"/>
    <property type="match status" value="1"/>
</dbReference>
<dbReference type="FunFam" id="3.40.630.10:FF:000004">
    <property type="entry name" value="Probable cytosol aminopeptidase"/>
    <property type="match status" value="1"/>
</dbReference>
<dbReference type="Gene3D" id="3.40.220.10">
    <property type="entry name" value="Leucine Aminopeptidase, subunit E, domain 1"/>
    <property type="match status" value="1"/>
</dbReference>
<dbReference type="Gene3D" id="3.40.630.10">
    <property type="entry name" value="Zn peptidases"/>
    <property type="match status" value="1"/>
</dbReference>
<dbReference type="HAMAP" id="MF_00181">
    <property type="entry name" value="Cytosol_peptidase_M17"/>
    <property type="match status" value="1"/>
</dbReference>
<dbReference type="InterPro" id="IPR011356">
    <property type="entry name" value="Leucine_aapep/pepB"/>
</dbReference>
<dbReference type="InterPro" id="IPR043472">
    <property type="entry name" value="Macro_dom-like"/>
</dbReference>
<dbReference type="InterPro" id="IPR000819">
    <property type="entry name" value="Peptidase_M17_C"/>
</dbReference>
<dbReference type="InterPro" id="IPR023042">
    <property type="entry name" value="Peptidase_M17_leu_NH2_pept"/>
</dbReference>
<dbReference type="InterPro" id="IPR008283">
    <property type="entry name" value="Peptidase_M17_N"/>
</dbReference>
<dbReference type="NCBIfam" id="NF002073">
    <property type="entry name" value="PRK00913.1-2"/>
    <property type="match status" value="1"/>
</dbReference>
<dbReference type="NCBIfam" id="NF002074">
    <property type="entry name" value="PRK00913.1-4"/>
    <property type="match status" value="1"/>
</dbReference>
<dbReference type="NCBIfam" id="NF002077">
    <property type="entry name" value="PRK00913.2-4"/>
    <property type="match status" value="1"/>
</dbReference>
<dbReference type="PANTHER" id="PTHR11963:SF23">
    <property type="entry name" value="CYTOSOL AMINOPEPTIDASE"/>
    <property type="match status" value="1"/>
</dbReference>
<dbReference type="PANTHER" id="PTHR11963">
    <property type="entry name" value="LEUCINE AMINOPEPTIDASE-RELATED"/>
    <property type="match status" value="1"/>
</dbReference>
<dbReference type="Pfam" id="PF00883">
    <property type="entry name" value="Peptidase_M17"/>
    <property type="match status" value="1"/>
</dbReference>
<dbReference type="Pfam" id="PF02789">
    <property type="entry name" value="Peptidase_M17_N"/>
    <property type="match status" value="1"/>
</dbReference>
<dbReference type="PRINTS" id="PR00481">
    <property type="entry name" value="LAMNOPPTDASE"/>
</dbReference>
<dbReference type="SUPFAM" id="SSF52949">
    <property type="entry name" value="Macro domain-like"/>
    <property type="match status" value="1"/>
</dbReference>
<dbReference type="SUPFAM" id="SSF53187">
    <property type="entry name" value="Zn-dependent exopeptidases"/>
    <property type="match status" value="1"/>
</dbReference>
<dbReference type="PROSITE" id="PS00631">
    <property type="entry name" value="CYTOSOL_AP"/>
    <property type="match status" value="1"/>
</dbReference>
<reference key="1">
    <citation type="journal article" date="2003" name="Proc. Natl. Acad. Sci. U.S.A.">
        <title>The complete genome sequence of Chromobacterium violaceum reveals remarkable and exploitable bacterial adaptability.</title>
        <authorList>
            <person name="Vasconcelos A.T.R."/>
            <person name="de Almeida D.F."/>
            <person name="Hungria M."/>
            <person name="Guimaraes C.T."/>
            <person name="Antonio R.V."/>
            <person name="Almeida F.C."/>
            <person name="de Almeida L.G.P."/>
            <person name="de Almeida R."/>
            <person name="Alves-Gomes J.A."/>
            <person name="Andrade E.M."/>
            <person name="Araripe J."/>
            <person name="de Araujo M.F.F."/>
            <person name="Astolfi-Filho S."/>
            <person name="Azevedo V."/>
            <person name="Baptista A.J."/>
            <person name="Bataus L.A.M."/>
            <person name="Batista J.S."/>
            <person name="Belo A."/>
            <person name="van den Berg C."/>
            <person name="Bogo M."/>
            <person name="Bonatto S."/>
            <person name="Bordignon J."/>
            <person name="Brigido M.M."/>
            <person name="Brito C.A."/>
            <person name="Brocchi M."/>
            <person name="Burity H.A."/>
            <person name="Camargo A.A."/>
            <person name="Cardoso D.D.P."/>
            <person name="Carneiro N.P."/>
            <person name="Carraro D.M."/>
            <person name="Carvalho C.M.B."/>
            <person name="Cascardo J.C.M."/>
            <person name="Cavada B.S."/>
            <person name="Chueire L.M.O."/>
            <person name="Creczynski-Pasa T.B."/>
            <person name="Cunha-Junior N.C."/>
            <person name="Fagundes N."/>
            <person name="Falcao C.L."/>
            <person name="Fantinatti F."/>
            <person name="Farias I.P."/>
            <person name="Felipe M.S.S."/>
            <person name="Ferrari L.P."/>
            <person name="Ferro J.A."/>
            <person name="Ferro M.I.T."/>
            <person name="Franco G.R."/>
            <person name="Freitas N.S.A."/>
            <person name="Furlan L.R."/>
            <person name="Gazzinelli R.T."/>
            <person name="Gomes E.A."/>
            <person name="Goncalves P.R."/>
            <person name="Grangeiro T.B."/>
            <person name="Grattapaglia D."/>
            <person name="Grisard E.C."/>
            <person name="Hanna E.S."/>
            <person name="Jardim S.N."/>
            <person name="Laurino J."/>
            <person name="Leoi L.C.T."/>
            <person name="Lima L.F.A."/>
            <person name="Loureiro M.F."/>
            <person name="Lyra M.C.C.P."/>
            <person name="Madeira H.M.F."/>
            <person name="Manfio G.P."/>
            <person name="Maranhao A.Q."/>
            <person name="Martins W.S."/>
            <person name="di Mauro S.M.Z."/>
            <person name="de Medeiros S.R.B."/>
            <person name="Meissner R.V."/>
            <person name="Moreira M.A.M."/>
            <person name="Nascimento F.F."/>
            <person name="Nicolas M.F."/>
            <person name="Oliveira J.G."/>
            <person name="Oliveira S.C."/>
            <person name="Paixao R.F.C."/>
            <person name="Parente J.A."/>
            <person name="Pedrosa F.O."/>
            <person name="Pena S.D.J."/>
            <person name="Pereira J.O."/>
            <person name="Pereira M."/>
            <person name="Pinto L.S.R.C."/>
            <person name="Pinto L.S."/>
            <person name="Porto J.I.R."/>
            <person name="Potrich D.P."/>
            <person name="Ramalho-Neto C.E."/>
            <person name="Reis A.M.M."/>
            <person name="Rigo L.U."/>
            <person name="Rondinelli E."/>
            <person name="Santos E.B.P."/>
            <person name="Santos F.R."/>
            <person name="Schneider M.P.C."/>
            <person name="Seuanez H.N."/>
            <person name="Silva A.M.R."/>
            <person name="da Silva A.L.C."/>
            <person name="Silva D.W."/>
            <person name="Silva R."/>
            <person name="Simoes I.C."/>
            <person name="Simon D."/>
            <person name="Soares C.M.A."/>
            <person name="Soares R.B.A."/>
            <person name="Souza E.M."/>
            <person name="Souza K.R.L."/>
            <person name="Souza R.C."/>
            <person name="Steffens M.B.R."/>
            <person name="Steindel M."/>
            <person name="Teixeira S.R."/>
            <person name="Urmenyi T."/>
            <person name="Vettore A."/>
            <person name="Wassem R."/>
            <person name="Zaha A."/>
            <person name="Simpson A.J.G."/>
        </authorList>
    </citation>
    <scope>NUCLEOTIDE SEQUENCE [LARGE SCALE GENOMIC DNA]</scope>
    <source>
        <strain>ATCC 12472 / DSM 30191 / JCM 1249 / CCUG 213 / NBRC 12614 / NCIMB 9131 / NCTC 9757 / MK</strain>
    </source>
</reference>
<feature type="chain" id="PRO_0000165742" description="Probable cytosol aminopeptidase">
    <location>
        <begin position="1"/>
        <end position="521"/>
    </location>
</feature>
<feature type="active site" evidence="1">
    <location>
        <position position="280"/>
    </location>
</feature>
<feature type="active site" evidence="1">
    <location>
        <position position="354"/>
    </location>
</feature>
<feature type="binding site" evidence="1">
    <location>
        <position position="268"/>
    </location>
    <ligand>
        <name>Mn(2+)</name>
        <dbReference type="ChEBI" id="CHEBI:29035"/>
        <label>2</label>
    </ligand>
</feature>
<feature type="binding site" evidence="1">
    <location>
        <position position="273"/>
    </location>
    <ligand>
        <name>Mn(2+)</name>
        <dbReference type="ChEBI" id="CHEBI:29035"/>
        <label>1</label>
    </ligand>
</feature>
<feature type="binding site" evidence="1">
    <location>
        <position position="273"/>
    </location>
    <ligand>
        <name>Mn(2+)</name>
        <dbReference type="ChEBI" id="CHEBI:29035"/>
        <label>2</label>
    </ligand>
</feature>
<feature type="binding site" evidence="1">
    <location>
        <position position="291"/>
    </location>
    <ligand>
        <name>Mn(2+)</name>
        <dbReference type="ChEBI" id="CHEBI:29035"/>
        <label>2</label>
    </ligand>
</feature>
<feature type="binding site" evidence="1">
    <location>
        <position position="350"/>
    </location>
    <ligand>
        <name>Mn(2+)</name>
        <dbReference type="ChEBI" id="CHEBI:29035"/>
        <label>1</label>
    </ligand>
</feature>
<feature type="binding site" evidence="1">
    <location>
        <position position="352"/>
    </location>
    <ligand>
        <name>Mn(2+)</name>
        <dbReference type="ChEBI" id="CHEBI:29035"/>
        <label>1</label>
    </ligand>
</feature>
<feature type="binding site" evidence="1">
    <location>
        <position position="352"/>
    </location>
    <ligand>
        <name>Mn(2+)</name>
        <dbReference type="ChEBI" id="CHEBI:29035"/>
        <label>2</label>
    </ligand>
</feature>
<gene>
    <name evidence="1" type="primary">pepA</name>
    <name type="ordered locus">CV_2914</name>
</gene>
<evidence type="ECO:0000255" key="1">
    <source>
        <dbReference type="HAMAP-Rule" id="MF_00181"/>
    </source>
</evidence>
<proteinExistence type="inferred from homology"/>
<sequence length="521" mass="56444">MEFNIKSGSPEKQRVACVIVGVYESRKLTFAADLLDRISNGFISDVIRHGDMEGKLGSTLVLHSVPHTLCDRVMLVGLGKERDFRAKEYREAVRASVKALTQTSASEAVSYLSELTVKKHDVEWMIEQATVVTLDALYRFDRFKSKQDESVREPRKLTLAVPRRSDLADGEKGLQRGLAIGNGMKLAKDLGNLPGNVCTPSYLGEEARKVAETFGAEAEILGPREIAELGMHSFLSVAKGSAEEARLIVLKHHGAKDKNDKPIVLVGKGITFDSGGISLKPGEGMDEMKYDMCGAATVLGAFRAAVEMNLPLNVIAIVPTCENMPNGNAVKPGDIVTSMSGQTIEILNTDAEGRLILCDALTYAERFSPATVIDVATLTGACVIALGHIATGLYSNQDSLARELLAAGEEVADRAWHMPMWDEYQEMLKSPFADMANIGGRPGGSVTAACFLSRFAKAYDWAHLDIAGTAWKGGKDKGATARPVPLLVQFLQDRADIALGNVVRRGRPRREAPEVADDEQD</sequence>
<organism>
    <name type="scientific">Chromobacterium violaceum (strain ATCC 12472 / DSM 30191 / JCM 1249 / CCUG 213 / NBRC 12614 / NCIMB 9131 / NCTC 9757 / MK)</name>
    <dbReference type="NCBI Taxonomy" id="243365"/>
    <lineage>
        <taxon>Bacteria</taxon>
        <taxon>Pseudomonadati</taxon>
        <taxon>Pseudomonadota</taxon>
        <taxon>Betaproteobacteria</taxon>
        <taxon>Neisseriales</taxon>
        <taxon>Chromobacteriaceae</taxon>
        <taxon>Chromobacterium</taxon>
    </lineage>
</organism>
<keyword id="KW-0031">Aminopeptidase</keyword>
<keyword id="KW-0963">Cytoplasm</keyword>
<keyword id="KW-0378">Hydrolase</keyword>
<keyword id="KW-0464">Manganese</keyword>
<keyword id="KW-0479">Metal-binding</keyword>
<keyword id="KW-0645">Protease</keyword>
<keyword id="KW-1185">Reference proteome</keyword>
<name>AMPA_CHRVO</name>